<reference key="1">
    <citation type="journal article" date="1997" name="DNA Res.">
        <title>Structural analysis of Arabidopsis thaliana chromosome 5. III. Sequence features of the regions of 1,191,918 bp covered by seventeen physically assigned P1 clones.</title>
        <authorList>
            <person name="Nakamura Y."/>
            <person name="Sato S."/>
            <person name="Kaneko T."/>
            <person name="Kotani H."/>
            <person name="Asamizu E."/>
            <person name="Miyajima N."/>
            <person name="Tabata S."/>
        </authorList>
    </citation>
    <scope>NUCLEOTIDE SEQUENCE [LARGE SCALE GENOMIC DNA]</scope>
    <source>
        <strain>cv. Columbia</strain>
    </source>
</reference>
<reference key="2">
    <citation type="journal article" date="2017" name="Plant J.">
        <title>Araport11: a complete reannotation of the Arabidopsis thaliana reference genome.</title>
        <authorList>
            <person name="Cheng C.Y."/>
            <person name="Krishnakumar V."/>
            <person name="Chan A.P."/>
            <person name="Thibaud-Nissen F."/>
            <person name="Schobel S."/>
            <person name="Town C.D."/>
        </authorList>
    </citation>
    <scope>GENOME REANNOTATION</scope>
    <source>
        <strain>cv. Columbia</strain>
    </source>
</reference>
<reference key="3">
    <citation type="journal article" date="2003" name="Science">
        <title>Empirical analysis of transcriptional activity in the Arabidopsis genome.</title>
        <authorList>
            <person name="Yamada K."/>
            <person name="Lim J."/>
            <person name="Dale J.M."/>
            <person name="Chen H."/>
            <person name="Shinn P."/>
            <person name="Palm C.J."/>
            <person name="Southwick A.M."/>
            <person name="Wu H.C."/>
            <person name="Kim C.J."/>
            <person name="Nguyen M."/>
            <person name="Pham P.K."/>
            <person name="Cheuk R.F."/>
            <person name="Karlin-Newmann G."/>
            <person name="Liu S.X."/>
            <person name="Lam B."/>
            <person name="Sakano H."/>
            <person name="Wu T."/>
            <person name="Yu G."/>
            <person name="Miranda M."/>
            <person name="Quach H.L."/>
            <person name="Tripp M."/>
            <person name="Chang C.H."/>
            <person name="Lee J.M."/>
            <person name="Toriumi M.J."/>
            <person name="Chan M.M."/>
            <person name="Tang C.C."/>
            <person name="Onodera C.S."/>
            <person name="Deng J.M."/>
            <person name="Akiyama K."/>
            <person name="Ansari Y."/>
            <person name="Arakawa T."/>
            <person name="Banh J."/>
            <person name="Banno F."/>
            <person name="Bowser L."/>
            <person name="Brooks S.Y."/>
            <person name="Carninci P."/>
            <person name="Chao Q."/>
            <person name="Choy N."/>
            <person name="Enju A."/>
            <person name="Goldsmith A.D."/>
            <person name="Gurjal M."/>
            <person name="Hansen N.F."/>
            <person name="Hayashizaki Y."/>
            <person name="Johnson-Hopson C."/>
            <person name="Hsuan V.W."/>
            <person name="Iida K."/>
            <person name="Karnes M."/>
            <person name="Khan S."/>
            <person name="Koesema E."/>
            <person name="Ishida J."/>
            <person name="Jiang P.X."/>
            <person name="Jones T."/>
            <person name="Kawai J."/>
            <person name="Kamiya A."/>
            <person name="Meyers C."/>
            <person name="Nakajima M."/>
            <person name="Narusaka M."/>
            <person name="Seki M."/>
            <person name="Sakurai T."/>
            <person name="Satou M."/>
            <person name="Tamse R."/>
            <person name="Vaysberg M."/>
            <person name="Wallender E.K."/>
            <person name="Wong C."/>
            <person name="Yamamura Y."/>
            <person name="Yuan S."/>
            <person name="Shinozaki K."/>
            <person name="Davis R.W."/>
            <person name="Theologis A."/>
            <person name="Ecker J.R."/>
        </authorList>
    </citation>
    <scope>NUCLEOTIDE SEQUENCE [LARGE SCALE MRNA]</scope>
    <source>
        <strain>cv. Columbia</strain>
    </source>
</reference>
<protein>
    <recommendedName>
        <fullName>Probable CCR4-associated factor 1 homolog 11</fullName>
        <ecNumber>3.1.13.4</ecNumber>
    </recommendedName>
</protein>
<evidence type="ECO:0000250" key="1"/>
<evidence type="ECO:0000305" key="2"/>
<feature type="chain" id="PRO_0000371561" description="Probable CCR4-associated factor 1 homolog 11">
    <location>
        <begin position="1"/>
        <end position="278"/>
    </location>
</feature>
<feature type="binding site" evidence="1">
    <location>
        <position position="42"/>
    </location>
    <ligand>
        <name>a divalent metal cation</name>
        <dbReference type="ChEBI" id="CHEBI:60240"/>
        <note>catalytic</note>
    </ligand>
</feature>
<feature type="binding site" evidence="1">
    <location>
        <position position="44"/>
    </location>
    <ligand>
        <name>a divalent metal cation</name>
        <dbReference type="ChEBI" id="CHEBI:60240"/>
        <note>catalytic</note>
    </ligand>
</feature>
<feature type="binding site" evidence="1">
    <location>
        <position position="172"/>
    </location>
    <ligand>
        <name>a divalent metal cation</name>
        <dbReference type="ChEBI" id="CHEBI:60240"/>
        <note>catalytic</note>
    </ligand>
</feature>
<feature type="binding site" evidence="1">
    <location>
        <position position="244"/>
    </location>
    <ligand>
        <name>a divalent metal cation</name>
        <dbReference type="ChEBI" id="CHEBI:60240"/>
        <note>catalytic</note>
    </ligand>
</feature>
<accession>Q9FMS6</accession>
<sequence length="278" mass="32169">MIKSEADLSDVIVIRDVWAYNLESEFDLIRGIVEDYPFISMDTEFPGVIYKADLDVLRRGNPNYLYNLLKSNVDALSLIQVGLTLSDADGNLPDLGGQKNRRYIWEFNFRDFDVERDPHAPDSIELLRRHGIDFERNRREGVESERFAELMMSSGLICNESVSWVTFHSAYDFGYLVKILTRRQLPVALREFLGLLRAFFGDRVYDVKHIMRFCEQRLYGGLDRVARSLEVNRAVGKCHQAGSDSLLTWQAFQRMRDLYFVEDGAEKHAGVLYGLEVF</sequence>
<comment type="function">
    <text evidence="1">Ubiquitous transcription factor required for a diverse set of processes. It is a component of the CCR4 complex involved in the control of gene expression (By similarity).</text>
</comment>
<comment type="catalytic activity">
    <reaction>
        <text>Exonucleolytic cleavage of poly(A) to 5'-AMP.</text>
        <dbReference type="EC" id="3.1.13.4"/>
    </reaction>
</comment>
<comment type="cofactor">
    <cofactor evidence="1">
        <name>a divalent metal cation</name>
        <dbReference type="ChEBI" id="CHEBI:60240"/>
    </cofactor>
</comment>
<comment type="subunit">
    <text evidence="1">Component of the CCR4-NOT complex, at least composed of CRR4 and CAF1 proteins.</text>
</comment>
<comment type="subcellular location">
    <subcellularLocation>
        <location evidence="1">Nucleus</location>
    </subcellularLocation>
    <subcellularLocation>
        <location evidence="1">Cytoplasm</location>
    </subcellularLocation>
</comment>
<comment type="similarity">
    <text evidence="2">Belongs to the CAF1 family.</text>
</comment>
<dbReference type="EC" id="3.1.13.4"/>
<dbReference type="EMBL" id="AB007651">
    <property type="protein sequence ID" value="BAB08323.1"/>
    <property type="molecule type" value="Genomic_DNA"/>
</dbReference>
<dbReference type="EMBL" id="CP002688">
    <property type="protein sequence ID" value="AED93001.1"/>
    <property type="molecule type" value="Genomic_DNA"/>
</dbReference>
<dbReference type="EMBL" id="AY063985">
    <property type="protein sequence ID" value="AAL36341.1"/>
    <property type="molecule type" value="mRNA"/>
</dbReference>
<dbReference type="EMBL" id="BT001962">
    <property type="protein sequence ID" value="AAN71961.1"/>
    <property type="molecule type" value="mRNA"/>
</dbReference>
<dbReference type="SMR" id="Q9FMS6"/>
<dbReference type="FunCoup" id="Q9FMS6">
    <property type="interactions" value="262"/>
</dbReference>
<dbReference type="STRING" id="3702.Q9FMS6"/>
<dbReference type="iPTMnet" id="Q9FMS6"/>
<dbReference type="PaxDb" id="3702-AT5G22250.1"/>
<dbReference type="DNASU" id="832285"/>
<dbReference type="EnsemblPlants" id="AT5G22250.1">
    <property type="protein sequence ID" value="AT5G22250.1"/>
    <property type="gene ID" value="AT5G22250"/>
</dbReference>
<dbReference type="GeneID" id="832285"/>
<dbReference type="Gramene" id="AT5G22250.1">
    <property type="protein sequence ID" value="AT5G22250.1"/>
    <property type="gene ID" value="AT5G22250"/>
</dbReference>
<dbReference type="KEGG" id="ath:AT5G22250"/>
<dbReference type="Araport" id="AT5G22250"/>
<dbReference type="TAIR" id="AT5G22250">
    <property type="gene designation" value="CAF1B"/>
</dbReference>
<dbReference type="eggNOG" id="KOG0304">
    <property type="taxonomic scope" value="Eukaryota"/>
</dbReference>
<dbReference type="HOGENOM" id="CLU_027974_0_1_1"/>
<dbReference type="InParanoid" id="Q9FMS6"/>
<dbReference type="OMA" id="WAYNLES"/>
<dbReference type="OrthoDB" id="1164111at2759"/>
<dbReference type="PhylomeDB" id="Q9FMS6"/>
<dbReference type="PRO" id="PR:Q9FMS6"/>
<dbReference type="Proteomes" id="UP000006548">
    <property type="component" value="Chromosome 5"/>
</dbReference>
<dbReference type="ExpressionAtlas" id="Q9FMS6">
    <property type="expression patterns" value="baseline and differential"/>
</dbReference>
<dbReference type="GO" id="GO:0030014">
    <property type="term" value="C:CCR4-NOT complex"/>
    <property type="evidence" value="ECO:0007669"/>
    <property type="project" value="InterPro"/>
</dbReference>
<dbReference type="GO" id="GO:0005737">
    <property type="term" value="C:cytoplasm"/>
    <property type="evidence" value="ECO:0007669"/>
    <property type="project" value="UniProtKB-SubCell"/>
</dbReference>
<dbReference type="GO" id="GO:0005634">
    <property type="term" value="C:nucleus"/>
    <property type="evidence" value="ECO:0007669"/>
    <property type="project" value="UniProtKB-SubCell"/>
</dbReference>
<dbReference type="GO" id="GO:0008408">
    <property type="term" value="F:3'-5' exonuclease activity"/>
    <property type="evidence" value="ECO:0000314"/>
    <property type="project" value="TAIR"/>
</dbReference>
<dbReference type="GO" id="GO:0046872">
    <property type="term" value="F:metal ion binding"/>
    <property type="evidence" value="ECO:0007669"/>
    <property type="project" value="UniProtKB-KW"/>
</dbReference>
<dbReference type="GO" id="GO:0004535">
    <property type="term" value="F:poly(A)-specific ribonuclease activity"/>
    <property type="evidence" value="ECO:0007669"/>
    <property type="project" value="UniProtKB-EC"/>
</dbReference>
<dbReference type="GO" id="GO:0003723">
    <property type="term" value="F:RNA binding"/>
    <property type="evidence" value="ECO:0007669"/>
    <property type="project" value="UniProtKB-KW"/>
</dbReference>
<dbReference type="GO" id="GO:0042742">
    <property type="term" value="P:defense response to bacterium"/>
    <property type="evidence" value="ECO:0000270"/>
    <property type="project" value="TAIR"/>
</dbReference>
<dbReference type="GO" id="GO:0000289">
    <property type="term" value="P:nuclear-transcribed mRNA poly(A) tail shortening"/>
    <property type="evidence" value="ECO:0000315"/>
    <property type="project" value="TAIR"/>
</dbReference>
<dbReference type="FunFam" id="3.30.420.10:FF:000027">
    <property type="entry name" value="Putative CCR4-associated factor 1 7"/>
    <property type="match status" value="1"/>
</dbReference>
<dbReference type="Gene3D" id="3.30.420.10">
    <property type="entry name" value="Ribonuclease H-like superfamily/Ribonuclease H"/>
    <property type="match status" value="1"/>
</dbReference>
<dbReference type="InterPro" id="IPR039637">
    <property type="entry name" value="CNOT7/CNOT8/Pop2"/>
</dbReference>
<dbReference type="InterPro" id="IPR006941">
    <property type="entry name" value="RNase_CAF1"/>
</dbReference>
<dbReference type="InterPro" id="IPR012337">
    <property type="entry name" value="RNaseH-like_sf"/>
</dbReference>
<dbReference type="InterPro" id="IPR036397">
    <property type="entry name" value="RNaseH_sf"/>
</dbReference>
<dbReference type="PANTHER" id="PTHR10797">
    <property type="entry name" value="CCR4-NOT TRANSCRIPTION COMPLEX SUBUNIT"/>
    <property type="match status" value="1"/>
</dbReference>
<dbReference type="Pfam" id="PF04857">
    <property type="entry name" value="CAF1"/>
    <property type="match status" value="1"/>
</dbReference>
<dbReference type="SUPFAM" id="SSF53098">
    <property type="entry name" value="Ribonuclease H-like"/>
    <property type="match status" value="1"/>
</dbReference>
<gene>
    <name type="primary">CAF1-11</name>
    <name type="ordered locus">At5g22250</name>
    <name type="ORF">T6G21.2</name>
</gene>
<organism>
    <name type="scientific">Arabidopsis thaliana</name>
    <name type="common">Mouse-ear cress</name>
    <dbReference type="NCBI Taxonomy" id="3702"/>
    <lineage>
        <taxon>Eukaryota</taxon>
        <taxon>Viridiplantae</taxon>
        <taxon>Streptophyta</taxon>
        <taxon>Embryophyta</taxon>
        <taxon>Tracheophyta</taxon>
        <taxon>Spermatophyta</taxon>
        <taxon>Magnoliopsida</taxon>
        <taxon>eudicotyledons</taxon>
        <taxon>Gunneridae</taxon>
        <taxon>Pentapetalae</taxon>
        <taxon>rosids</taxon>
        <taxon>malvids</taxon>
        <taxon>Brassicales</taxon>
        <taxon>Brassicaceae</taxon>
        <taxon>Camelineae</taxon>
        <taxon>Arabidopsis</taxon>
    </lineage>
</organism>
<proteinExistence type="evidence at transcript level"/>
<keyword id="KW-0963">Cytoplasm</keyword>
<keyword id="KW-0269">Exonuclease</keyword>
<keyword id="KW-0378">Hydrolase</keyword>
<keyword id="KW-0479">Metal-binding</keyword>
<keyword id="KW-0540">Nuclease</keyword>
<keyword id="KW-0539">Nucleus</keyword>
<keyword id="KW-1185">Reference proteome</keyword>
<keyword id="KW-0694">RNA-binding</keyword>
<keyword id="KW-0804">Transcription</keyword>
<keyword id="KW-0805">Transcription regulation</keyword>
<name>CAF1K_ARATH</name>